<organism>
    <name type="scientific">Shigella sonnei (strain Ss046)</name>
    <dbReference type="NCBI Taxonomy" id="300269"/>
    <lineage>
        <taxon>Bacteria</taxon>
        <taxon>Pseudomonadati</taxon>
        <taxon>Pseudomonadota</taxon>
        <taxon>Gammaproteobacteria</taxon>
        <taxon>Enterobacterales</taxon>
        <taxon>Enterobacteriaceae</taxon>
        <taxon>Shigella</taxon>
    </lineage>
</organism>
<protein>
    <recommendedName>
        <fullName evidence="1">Translation initiation factor IF-1</fullName>
    </recommendedName>
</protein>
<keyword id="KW-0963">Cytoplasm</keyword>
<keyword id="KW-0396">Initiation factor</keyword>
<keyword id="KW-0648">Protein biosynthesis</keyword>
<keyword id="KW-1185">Reference proteome</keyword>
<keyword id="KW-0694">RNA-binding</keyword>
<keyword id="KW-0699">rRNA-binding</keyword>
<proteinExistence type="inferred from homology"/>
<feature type="chain" id="PRO_0000263872" description="Translation initiation factor IF-1">
    <location>
        <begin position="1"/>
        <end position="72"/>
    </location>
</feature>
<feature type="domain" description="S1-like" evidence="1">
    <location>
        <begin position="1"/>
        <end position="72"/>
    </location>
</feature>
<comment type="function">
    <text evidence="1">One of the essential components for the initiation of protein synthesis. Stabilizes the binding of IF-2 and IF-3 on the 30S subunit to which N-formylmethionyl-tRNA(fMet) subsequently binds. Helps modulate mRNA selection, yielding the 30S pre-initiation complex (PIC). Upon addition of the 50S ribosomal subunit IF-1, IF-2 and IF-3 are released leaving the mature 70S translation initiation complex.</text>
</comment>
<comment type="subunit">
    <text evidence="1">Component of the 30S ribosomal translation pre-initiation complex which assembles on the 30S ribosome in the order IF-2 and IF-3, IF-1 and N-formylmethionyl-tRNA(fMet); mRNA recruitment can occur at any time during PIC assembly.</text>
</comment>
<comment type="subcellular location">
    <subcellularLocation>
        <location evidence="1">Cytoplasm</location>
    </subcellularLocation>
</comment>
<comment type="similarity">
    <text evidence="1">Belongs to the IF-1 family.</text>
</comment>
<evidence type="ECO:0000255" key="1">
    <source>
        <dbReference type="HAMAP-Rule" id="MF_00075"/>
    </source>
</evidence>
<sequence length="72" mass="8250">MAKEDNIEMQGTVLETLPNTMFRVELENGHVVTAHISGKMRKNYIRILTGDKVTVELTPYDLSKGRIVFRSR</sequence>
<dbReference type="EMBL" id="CP000038">
    <property type="protein sequence ID" value="AAZ87626.1"/>
    <property type="molecule type" value="Genomic_DNA"/>
</dbReference>
<dbReference type="RefSeq" id="WP_001040187.1">
    <property type="nucleotide sequence ID" value="NC_007384.1"/>
</dbReference>
<dbReference type="SMR" id="Q3Z3N6"/>
<dbReference type="GeneID" id="93776536"/>
<dbReference type="KEGG" id="ssn:SSON_0885"/>
<dbReference type="HOGENOM" id="CLU_151267_1_0_6"/>
<dbReference type="Proteomes" id="UP000002529">
    <property type="component" value="Chromosome"/>
</dbReference>
<dbReference type="GO" id="GO:0005829">
    <property type="term" value="C:cytosol"/>
    <property type="evidence" value="ECO:0007669"/>
    <property type="project" value="TreeGrafter"/>
</dbReference>
<dbReference type="GO" id="GO:0043022">
    <property type="term" value="F:ribosome binding"/>
    <property type="evidence" value="ECO:0007669"/>
    <property type="project" value="UniProtKB-UniRule"/>
</dbReference>
<dbReference type="GO" id="GO:0019843">
    <property type="term" value="F:rRNA binding"/>
    <property type="evidence" value="ECO:0007669"/>
    <property type="project" value="UniProtKB-UniRule"/>
</dbReference>
<dbReference type="GO" id="GO:0003743">
    <property type="term" value="F:translation initiation factor activity"/>
    <property type="evidence" value="ECO:0007669"/>
    <property type="project" value="UniProtKB-UniRule"/>
</dbReference>
<dbReference type="CDD" id="cd04451">
    <property type="entry name" value="S1_IF1"/>
    <property type="match status" value="1"/>
</dbReference>
<dbReference type="FunFam" id="2.40.50.140:FF:000002">
    <property type="entry name" value="Translation initiation factor IF-1"/>
    <property type="match status" value="1"/>
</dbReference>
<dbReference type="Gene3D" id="2.40.50.140">
    <property type="entry name" value="Nucleic acid-binding proteins"/>
    <property type="match status" value="1"/>
</dbReference>
<dbReference type="HAMAP" id="MF_00075">
    <property type="entry name" value="IF_1"/>
    <property type="match status" value="1"/>
</dbReference>
<dbReference type="InterPro" id="IPR012340">
    <property type="entry name" value="NA-bd_OB-fold"/>
</dbReference>
<dbReference type="InterPro" id="IPR006196">
    <property type="entry name" value="RNA-binding_domain_S1_IF1"/>
</dbReference>
<dbReference type="InterPro" id="IPR003029">
    <property type="entry name" value="S1_domain"/>
</dbReference>
<dbReference type="InterPro" id="IPR004368">
    <property type="entry name" value="TIF_IF1"/>
</dbReference>
<dbReference type="NCBIfam" id="TIGR00008">
    <property type="entry name" value="infA"/>
    <property type="match status" value="1"/>
</dbReference>
<dbReference type="PANTHER" id="PTHR33370">
    <property type="entry name" value="TRANSLATION INITIATION FACTOR IF-1, CHLOROPLASTIC"/>
    <property type="match status" value="1"/>
</dbReference>
<dbReference type="PANTHER" id="PTHR33370:SF1">
    <property type="entry name" value="TRANSLATION INITIATION FACTOR IF-1, CHLOROPLASTIC"/>
    <property type="match status" value="1"/>
</dbReference>
<dbReference type="Pfam" id="PF01176">
    <property type="entry name" value="eIF-1a"/>
    <property type="match status" value="1"/>
</dbReference>
<dbReference type="SMART" id="SM00316">
    <property type="entry name" value="S1"/>
    <property type="match status" value="1"/>
</dbReference>
<dbReference type="SUPFAM" id="SSF50249">
    <property type="entry name" value="Nucleic acid-binding proteins"/>
    <property type="match status" value="1"/>
</dbReference>
<dbReference type="PROSITE" id="PS50832">
    <property type="entry name" value="S1_IF1_TYPE"/>
    <property type="match status" value="1"/>
</dbReference>
<accession>Q3Z3N6</accession>
<name>IF1_SHISS</name>
<gene>
    <name evidence="1" type="primary">infA</name>
    <name type="ordered locus">SSON_0885</name>
</gene>
<reference key="1">
    <citation type="journal article" date="2005" name="Nucleic Acids Res.">
        <title>Genome dynamics and diversity of Shigella species, the etiologic agents of bacillary dysentery.</title>
        <authorList>
            <person name="Yang F."/>
            <person name="Yang J."/>
            <person name="Zhang X."/>
            <person name="Chen L."/>
            <person name="Jiang Y."/>
            <person name="Yan Y."/>
            <person name="Tang X."/>
            <person name="Wang J."/>
            <person name="Xiong Z."/>
            <person name="Dong J."/>
            <person name="Xue Y."/>
            <person name="Zhu Y."/>
            <person name="Xu X."/>
            <person name="Sun L."/>
            <person name="Chen S."/>
            <person name="Nie H."/>
            <person name="Peng J."/>
            <person name="Xu J."/>
            <person name="Wang Y."/>
            <person name="Yuan Z."/>
            <person name="Wen Y."/>
            <person name="Yao Z."/>
            <person name="Shen Y."/>
            <person name="Qiang B."/>
            <person name="Hou Y."/>
            <person name="Yu J."/>
            <person name="Jin Q."/>
        </authorList>
    </citation>
    <scope>NUCLEOTIDE SEQUENCE [LARGE SCALE GENOMIC DNA]</scope>
    <source>
        <strain>Ss046</strain>
    </source>
</reference>